<feature type="signal peptide" evidence="5">
    <location>
        <begin position="1"/>
        <end position="32"/>
    </location>
</feature>
<feature type="chain" id="PRO_0000052355" description="Sodium/hydrogen exchanger 3">
    <location>
        <begin position="33"/>
        <end position="839"/>
    </location>
</feature>
<feature type="topological domain" description="Extracellular" evidence="9">
    <location>
        <begin position="33"/>
        <end position="56"/>
    </location>
</feature>
<feature type="transmembrane region" description="Helical; Name=1" evidence="4">
    <location>
        <begin position="57"/>
        <end position="79"/>
    </location>
</feature>
<feature type="topological domain" description="Cytoplasmic" evidence="9">
    <location>
        <begin position="80"/>
        <end position="87"/>
    </location>
</feature>
<feature type="transmembrane region" description="Helical; Name=2" evidence="4">
    <location>
        <begin position="88"/>
        <end position="107"/>
    </location>
</feature>
<feature type="topological domain" description="Extracellular" evidence="9">
    <location>
        <begin position="108"/>
        <end position="116"/>
    </location>
</feature>
<feature type="transmembrane region" description="Helical; Name=3" evidence="4">
    <location>
        <begin position="117"/>
        <end position="134"/>
    </location>
</feature>
<feature type="topological domain" description="Cytoplasmic" evidence="9">
    <location>
        <begin position="135"/>
        <end position="137"/>
    </location>
</feature>
<feature type="transmembrane region" description="Helical; Name=4" evidence="4">
    <location>
        <begin position="138"/>
        <end position="173"/>
    </location>
</feature>
<feature type="topological domain" description="Extracellular" evidence="9">
    <location>
        <begin position="174"/>
        <end position="186"/>
    </location>
</feature>
<feature type="transmembrane region" description="Helical; Name=5" evidence="4">
    <location>
        <begin position="187"/>
        <end position="208"/>
    </location>
</feature>
<feature type="topological domain" description="Cytoplasmic" evidence="9">
    <location>
        <begin position="209"/>
        <end position="210"/>
    </location>
</feature>
<feature type="transmembrane region" description="Helical; Name=6" evidence="4">
    <location>
        <begin position="211"/>
        <end position="242"/>
    </location>
</feature>
<feature type="topological domain" description="Extracellular" evidence="9">
    <location>
        <begin position="243"/>
        <end position="249"/>
    </location>
</feature>
<feature type="transmembrane region" description="Helical; Name=7" evidence="4">
    <location>
        <begin position="250"/>
        <end position="284"/>
    </location>
</feature>
<feature type="topological domain" description="Cytoplasmic" evidence="9">
    <location>
        <begin position="285"/>
        <end position="286"/>
    </location>
</feature>
<feature type="transmembrane region" description="Helical; Name=8" evidence="4">
    <location>
        <begin position="287"/>
        <end position="309"/>
    </location>
</feature>
<feature type="topological domain" description="Extracellular" evidence="9">
    <location>
        <begin position="310"/>
        <end position="311"/>
    </location>
</feature>
<feature type="transmembrane region" description="Helical; Name=9" evidence="4">
    <location>
        <begin position="312"/>
        <end position="328"/>
    </location>
</feature>
<feature type="topological domain" description="Cytoplasmic" evidence="9">
    <location>
        <begin position="329"/>
        <end position="335"/>
    </location>
</feature>
<feature type="transmembrane region" description="Helical; Name=10" evidence="4">
    <location>
        <begin position="336"/>
        <end position="364"/>
    </location>
</feature>
<feature type="topological domain" description="Extracellular" evidence="9">
    <location>
        <begin position="365"/>
        <end position="372"/>
    </location>
</feature>
<feature type="transmembrane region" description="Helical; Name=11" evidence="4">
    <location>
        <begin position="373"/>
        <end position="394"/>
    </location>
</feature>
<feature type="topological domain" description="Cytoplasmic" evidence="9">
    <location>
        <begin position="395"/>
        <end position="407"/>
    </location>
</feature>
<feature type="transmembrane region" description="Helical; Name=12" evidence="4">
    <location>
        <begin position="408"/>
        <end position="431"/>
    </location>
</feature>
<feature type="topological domain" description="Extracellular" evidence="9">
    <location>
        <begin position="432"/>
        <end position="438"/>
    </location>
</feature>
<feature type="transmembrane region" description="Helical; Name=13" evidence="4">
    <location>
        <begin position="439"/>
        <end position="472"/>
    </location>
</feature>
<feature type="topological domain" description="Cytoplasmic" evidence="9">
    <location>
        <begin position="473"/>
        <end position="839"/>
    </location>
</feature>
<feature type="region of interest" description="Interaction with EZR" evidence="2">
    <location>
        <begin position="581"/>
        <end position="595"/>
    </location>
</feature>
<feature type="region of interest" description="Interaction with NHERF4" evidence="4">
    <location>
        <begin position="596"/>
        <end position="673"/>
    </location>
</feature>
<feature type="region of interest" description="Interaction with AHCYL1" evidence="2">
    <location>
        <begin position="597"/>
        <end position="701"/>
    </location>
</feature>
<feature type="region of interest" description="Disordered" evidence="6">
    <location>
        <begin position="688"/>
        <end position="710"/>
    </location>
</feature>
<feature type="compositionally biased region" description="Basic residues" evidence="6">
    <location>
        <begin position="688"/>
        <end position="697"/>
    </location>
</feature>
<feature type="binding site" evidence="4">
    <location>
        <position position="143"/>
    </location>
    <ligand>
        <name>a 1,2-diacyl-sn-glycero-3-phospho-(1D-myo-inositol)</name>
        <dbReference type="ChEBI" id="CHEBI:57880"/>
    </ligand>
</feature>
<feature type="binding site" evidence="4">
    <location>
        <position position="146"/>
    </location>
    <ligand>
        <name>a 1,2-diacyl-sn-glycero-3-phospho-(1D-myo-inositol)</name>
        <dbReference type="ChEBI" id="CHEBI:57880"/>
    </ligand>
</feature>
<feature type="binding site" evidence="4">
    <location>
        <position position="147"/>
    </location>
    <ligand>
        <name>a 1,2-diacyl-sn-glycero-3-phospho-(1D-myo-inositol)</name>
        <dbReference type="ChEBI" id="CHEBI:57880"/>
    </ligand>
</feature>
<feature type="binding site" evidence="4">
    <location>
        <position position="403"/>
    </location>
    <ligand>
        <name>a 1,2-diacyl-sn-glycero-3-phospho-(1D-myo-inositol)</name>
        <dbReference type="ChEBI" id="CHEBI:57880"/>
    </ligand>
</feature>
<feature type="binding site" evidence="4">
    <location>
        <position position="502"/>
    </location>
    <ligand>
        <name>a 1,2-diacyl-sn-glycero-3-phospho-(1D-myo-inositol)</name>
        <dbReference type="ChEBI" id="CHEBI:57880"/>
    </ligand>
</feature>
<feature type="binding site" evidence="4">
    <location>
        <position position="503"/>
    </location>
    <ligand>
        <name>a 1,2-diacyl-sn-glycero-3-phospho-(1D-myo-inositol)</name>
        <dbReference type="ChEBI" id="CHEBI:57880"/>
    </ligand>
</feature>
<feature type="binding site" evidence="4">
    <location>
        <position position="505"/>
    </location>
    <ligand>
        <name>a 1,2-diacyl-sn-glycero-3-phospho-(1D-myo-inositol)</name>
        <dbReference type="ChEBI" id="CHEBI:57880"/>
    </ligand>
</feature>
<feature type="modified residue" description="Phosphoserine" evidence="3">
    <location>
        <position position="560"/>
    </location>
</feature>
<feature type="modified residue" description="Phosphoserine" evidence="3">
    <location>
        <position position="568"/>
    </location>
</feature>
<feature type="modified residue" description="Phosphoserine" evidence="1">
    <location>
        <position position="598"/>
    </location>
</feature>
<feature type="modified residue" description="Phosphoserine" evidence="3">
    <location>
        <position position="613"/>
    </location>
</feature>
<feature type="modified residue" description="Phosphoserine; by SGK1" evidence="2">
    <location>
        <position position="669"/>
    </location>
</feature>
<feature type="modified residue" description="Phosphoserine" evidence="2">
    <location>
        <position position="724"/>
    </location>
</feature>
<feature type="modified residue" description="Phosphoserine" evidence="1">
    <location>
        <position position="815"/>
    </location>
</feature>
<feature type="modified residue" description="Phosphoserine" evidence="1">
    <location>
        <position position="818"/>
    </location>
</feature>
<proteinExistence type="evidence at protein level"/>
<accession>Q28362</accession>
<keyword id="KW-0050">Antiport</keyword>
<keyword id="KW-1003">Cell membrane</keyword>
<keyword id="KW-0967">Endosome</keyword>
<keyword id="KW-0406">Ion transport</keyword>
<keyword id="KW-0472">Membrane</keyword>
<keyword id="KW-0597">Phosphoprotein</keyword>
<keyword id="KW-0732">Signal</keyword>
<keyword id="KW-0915">Sodium</keyword>
<keyword id="KW-0739">Sodium transport</keyword>
<keyword id="KW-0812">Transmembrane</keyword>
<keyword id="KW-1133">Transmembrane helix</keyword>
<keyword id="KW-0813">Transport</keyword>
<dbReference type="EMBL" id="L42522">
    <property type="protein sequence ID" value="AAA98816.1"/>
    <property type="molecule type" value="mRNA"/>
</dbReference>
<dbReference type="SMR" id="Q28362"/>
<dbReference type="IntAct" id="Q28362">
    <property type="interactions" value="1"/>
</dbReference>
<dbReference type="MINT" id="Q28362"/>
<dbReference type="GlyCosmos" id="Q28362">
    <property type="glycosylation" value="1 site, No reported glycans"/>
</dbReference>
<dbReference type="GO" id="GO:0016324">
    <property type="term" value="C:apical plasma membrane"/>
    <property type="evidence" value="ECO:0000250"/>
    <property type="project" value="UniProtKB"/>
</dbReference>
<dbReference type="GO" id="GO:0031526">
    <property type="term" value="C:brush border membrane"/>
    <property type="evidence" value="ECO:0000250"/>
    <property type="project" value="UniProtKB"/>
</dbReference>
<dbReference type="GO" id="GO:0031901">
    <property type="term" value="C:early endosome membrane"/>
    <property type="evidence" value="ECO:0007669"/>
    <property type="project" value="UniProtKB-SubCell"/>
</dbReference>
<dbReference type="GO" id="GO:0005886">
    <property type="term" value="C:plasma membrane"/>
    <property type="evidence" value="ECO:0000250"/>
    <property type="project" value="UniProtKB"/>
</dbReference>
<dbReference type="GO" id="GO:0055038">
    <property type="term" value="C:recycling endosome membrane"/>
    <property type="evidence" value="ECO:0007669"/>
    <property type="project" value="UniProtKB-SubCell"/>
</dbReference>
<dbReference type="GO" id="GO:0042802">
    <property type="term" value="F:identical protein binding"/>
    <property type="evidence" value="ECO:0000250"/>
    <property type="project" value="UniProtKB"/>
</dbReference>
<dbReference type="GO" id="GO:0030165">
    <property type="term" value="F:PDZ domain binding"/>
    <property type="evidence" value="ECO:0000250"/>
    <property type="project" value="UniProtKB"/>
</dbReference>
<dbReference type="GO" id="GO:0035091">
    <property type="term" value="F:phosphatidylinositol binding"/>
    <property type="evidence" value="ECO:0000250"/>
    <property type="project" value="UniProtKB"/>
</dbReference>
<dbReference type="GO" id="GO:0015386">
    <property type="term" value="F:potassium:proton antiporter activity"/>
    <property type="evidence" value="ECO:0007669"/>
    <property type="project" value="TreeGrafter"/>
</dbReference>
<dbReference type="GO" id="GO:0015385">
    <property type="term" value="F:sodium:proton antiporter activity"/>
    <property type="evidence" value="ECO:0000250"/>
    <property type="project" value="UniProtKB"/>
</dbReference>
<dbReference type="GO" id="GO:0051453">
    <property type="term" value="P:regulation of intracellular pH"/>
    <property type="evidence" value="ECO:0007669"/>
    <property type="project" value="TreeGrafter"/>
</dbReference>
<dbReference type="GO" id="GO:0098719">
    <property type="term" value="P:sodium ion import across plasma membrane"/>
    <property type="evidence" value="ECO:0000250"/>
    <property type="project" value="UniProtKB"/>
</dbReference>
<dbReference type="Gene3D" id="6.10.140.1330">
    <property type="match status" value="1"/>
</dbReference>
<dbReference type="InterPro" id="IPR018422">
    <property type="entry name" value="Cation/H_exchanger_CPA1"/>
</dbReference>
<dbReference type="InterPro" id="IPR006153">
    <property type="entry name" value="Cation/H_exchanger_TM"/>
</dbReference>
<dbReference type="InterPro" id="IPR018410">
    <property type="entry name" value="Na/H_exchanger_3/5"/>
</dbReference>
<dbReference type="InterPro" id="IPR004709">
    <property type="entry name" value="NaH_exchanger"/>
</dbReference>
<dbReference type="NCBIfam" id="TIGR00840">
    <property type="entry name" value="b_cpa1"/>
    <property type="match status" value="1"/>
</dbReference>
<dbReference type="PANTHER" id="PTHR10110">
    <property type="entry name" value="SODIUM/HYDROGEN EXCHANGER"/>
    <property type="match status" value="1"/>
</dbReference>
<dbReference type="PANTHER" id="PTHR10110:SF90">
    <property type="entry name" value="SODIUM_HYDROGEN EXCHANGER 3"/>
    <property type="match status" value="1"/>
</dbReference>
<dbReference type="Pfam" id="PF00999">
    <property type="entry name" value="Na_H_Exchanger"/>
    <property type="match status" value="1"/>
</dbReference>
<dbReference type="PRINTS" id="PR01084">
    <property type="entry name" value="NAHEXCHNGR"/>
</dbReference>
<dbReference type="PRINTS" id="PR01087">
    <property type="entry name" value="NAHEXCHNGR3"/>
</dbReference>
<reference key="1">
    <citation type="journal article" date="1995" name="Am. J. Physiol.">
        <title>Acid incubation increases NHE-3 mRNA abundance in OKP cells.</title>
        <authorList>
            <person name="Amemiya M."/>
            <person name="Yamaji Y."/>
            <person name="Cano A."/>
            <person name="Moe O.W."/>
            <person name="Alpern R.J."/>
        </authorList>
    </citation>
    <scope>NUCLEOTIDE SEQUENCE [MRNA]</scope>
</reference>
<reference key="2">
    <citation type="journal article" date="2005" name="Am. J. Physiol.">
        <title>Activation of NHE3 by dexamethasone requires phosphorylation of NHE3 at Ser663 by SGK1.</title>
        <authorList>
            <person name="Wang D."/>
            <person name="Sun H."/>
            <person name="Lang F."/>
            <person name="Yun C.C."/>
        </authorList>
    </citation>
    <scope>PHOSPHORYLATION AT SER-669 BY SGK1</scope>
    <scope>SUBCELLULAR LOCATION</scope>
</reference>
<reference key="3">
    <citation type="journal article" date="2010" name="J. Biol. Chem.">
        <title>Activation of Na+/H+ exchanger NHE3 by angiotensin II is mediated by inositol 1,4,5-triphosphate (IP3) receptor-binding protein released with IP3 (IRBIT) and Ca2+/calmodulin-dependent protein kinase II.</title>
        <authorList>
            <person name="He P."/>
            <person name="Klein J."/>
            <person name="Yun C.C."/>
        </authorList>
    </citation>
    <scope>SUBCELLULAR LOCATION</scope>
    <scope>INTERACTION WITH AHCYL1</scope>
</reference>
<gene>
    <name type="primary">SLC9A3</name>
    <name type="synonym">NHE3</name>
</gene>
<protein>
    <recommendedName>
        <fullName>Sodium/hydrogen exchanger 3</fullName>
    </recommendedName>
    <alternativeName>
        <fullName>Na(+)/H(+) exchanger 3</fullName>
        <shortName>NHE-3</shortName>
    </alternativeName>
    <alternativeName>
        <fullName>Solute carrier family 9 member 3</fullName>
    </alternativeName>
</protein>
<organism>
    <name type="scientific">Didelphis virginiana</name>
    <name type="common">North American opossum</name>
    <name type="synonym">Didelphis marsupialis virginiana</name>
    <dbReference type="NCBI Taxonomy" id="9267"/>
    <lineage>
        <taxon>Eukaryota</taxon>
        <taxon>Metazoa</taxon>
        <taxon>Chordata</taxon>
        <taxon>Craniata</taxon>
        <taxon>Vertebrata</taxon>
        <taxon>Euteleostomi</taxon>
        <taxon>Mammalia</taxon>
        <taxon>Metatheria</taxon>
        <taxon>Didelphimorphia</taxon>
        <taxon>Didelphidae</taxon>
        <taxon>Didelphis</taxon>
    </lineage>
</organism>
<comment type="function">
    <text evidence="4">Plasma membrane Na(+)/H(+) antiporter. Exchanges intracellular H(+) ions for extracellular Na(+) in 1:1 stoichiometry, playing a key role in salt and fluid absorption and pH homeostasis. Major apical Na(+)/H(+) exchanger in kidney and intestine playing an important role in renal and intestine Na(+) absorption and blood pressure regulation.</text>
</comment>
<comment type="catalytic activity">
    <reaction evidence="4">
        <text>Na(+)(in) + H(+)(out) = Na(+)(out) + H(+)(in)</text>
        <dbReference type="Rhea" id="RHEA:29419"/>
        <dbReference type="ChEBI" id="CHEBI:15378"/>
        <dbReference type="ChEBI" id="CHEBI:29101"/>
    </reaction>
</comment>
<comment type="activity regulation">
    <text evidence="2 4">Seems to switch between active and inactive modes in response to various stimuli (By similarity). Activated directly or indirectly by membrane phosphatidylinositol (PIs) (By similarity). Regulated by a variety of auxiliary proteins, which facilitate the maturation, cell surface expression and function of the transporter. Inhibited specifically by the drug tenapanor (By similarity).</text>
</comment>
<comment type="subunit">
    <text evidence="2 3 4 8">Homodimer (By similarity). Found in the forms of complex and dynamic macromolecular complexes (By similarity). Binds NHERF1 and NHERF2. Interacts with CHP1, CHP2 and SHANK2. Interacts with NHERF4 and interactions decrease in response to elevated calcium ion levels (By similarity). Interacts with PDZK1 (via C-terminal PDZ domain) (By similarity). Interacts with AHCYL1; the interaction is required for SLC9A3 activity (PubMed:20584908). Interacts with EZR; interaction targets SLC9A3 to the apical membrane (By similarity). Interacts with SNX27 (via PDZ domains); directs SLC9A3 membrane insertion from early endosomes to the plasma membrane (By similarity).</text>
</comment>
<comment type="interaction">
    <interactant intactId="EBI-7817027">
        <id>Q28362</id>
    </interactant>
    <interactant intactId="EBI-493777">
        <id>Q6P0Q8</id>
        <label>MAST2</label>
    </interactant>
    <organismsDiffer>true</organismsDiffer>
    <experiments>2</experiments>
</comment>
<comment type="subcellular location">
    <subcellularLocation>
        <location evidence="7 8">Apical cell membrane</location>
        <topology evidence="4">Multi-pass membrane protein</topology>
    </subcellularLocation>
    <subcellularLocation>
        <location evidence="4">Cell membrane</location>
        <topology evidence="4">Multi-pass membrane protein</topology>
    </subcellularLocation>
    <subcellularLocation>
        <location evidence="4">Recycling endosome membrane</location>
        <topology evidence="4">Multi-pass membrane protein</topology>
    </subcellularLocation>
    <subcellularLocation>
        <location evidence="4">Early endosome membrane</location>
        <topology evidence="4">Multi-pass membrane protein</topology>
    </subcellularLocation>
    <text evidence="8">In intestinal epithelial cells, localizes to the ileal brush border. Phosphorylation at Ser-663 by SGK1 is associated with increased abundance at the cell membrane. Angiotensin-2 enhances apical expression.</text>
</comment>
<comment type="domain">
    <text evidence="4">The C-terminal intracellular domain is subject to extensive post-translational modifications and binding partner interactions which regulate transporter activity, scaffolding functions, downstream events and localization.</text>
</comment>
<comment type="PTM">
    <text evidence="2 7">Phosphorylated by PKA, which inhibits activity (By similarity). Phosphorylation at Ser-669 by SGK1 is associated with increased abundance at the cell membrane.</text>
</comment>
<comment type="similarity">
    <text evidence="9">Belongs to the monovalent cation:proton antiporter 1 (CPA1) transporter (TC 2.A.36) family.</text>
</comment>
<name>SL9A3_DIDVI</name>
<sequence length="839" mass="94766">MPLGVRGTRREFRFPVWGLLLLALWMLPRALGVEEIPGPDSHEKQGFQIVTFKWHHVQDPYIIALWILVASLAKIVFHLSHKVTSVVPESALLIVLGLILGGIVWAADHIASFTLTPTVFFFYLLPPIVLDAGYFMPNRLFFGNLGTILLYAVIGTVWNAATTGLSLYGVYLSGIMGDLSIGLLDFLLFGSLIAAVDPVAVLAVFEEVHVNDVLFIIVFGESLLNDAVTVVLYNVFDSFVSLGADKVTGVDCVKGIVSFFVVSLGGTLIGIIFAFLLSLVTRFTKHVRIIEPGFVFIISYLSYLTSEMLSLSAILAITFCGICCQKYVKANISEQSATTVRYTMKMLASGAETIIFMFLGISAVDPAIWTWNTAFILLTLVFISVYRAIGVVLQTWLLNKYRMVQLEIIDQVVMSYGGLRGAVAYALVVLLDEKKVKEKNLFVSTTIIVVFFTVIFQGLTIKPLVQWLKVKKSEHREPKLNEKLHGRAFDHILSAIEDISGQIGHNYLRDKWSNFDRKVLSKLLMRRSAQKSRDRILNVFHELNLKDAISYVAEGERRGSLAFIRSPSTDNIVNVDFSTPRPSTVEASVSYLLRENVSTVCLDMQALEQRRKSIRDTEDTVTHHTLQQYLYKPRQEYKHLYSRHELTSNEDEKQDKEIFHRTMRKRLESFKSTKLGINQTKKTAKLYKRERGQKRRNSSIPNGKIPMESPTRDFTFKEKELEFSDPEETNEYEAEEMSGGIEFLANVTQDTATDSTTGIDNPVFSPEEDQSIFTKVPPWLSPEETVVPSQRARVQIPYSPSNFRRLTPIRLSTKSVDSFLLADSPEERPRSFLPESTHM</sequence>
<evidence type="ECO:0000250" key="1">
    <source>
        <dbReference type="UniProtKB" id="G3X939"/>
    </source>
</evidence>
<evidence type="ECO:0000250" key="2">
    <source>
        <dbReference type="UniProtKB" id="P26432"/>
    </source>
</evidence>
<evidence type="ECO:0000250" key="3">
    <source>
        <dbReference type="UniProtKB" id="P26433"/>
    </source>
</evidence>
<evidence type="ECO:0000250" key="4">
    <source>
        <dbReference type="UniProtKB" id="P48764"/>
    </source>
</evidence>
<evidence type="ECO:0000255" key="5"/>
<evidence type="ECO:0000256" key="6">
    <source>
        <dbReference type="SAM" id="MobiDB-lite"/>
    </source>
</evidence>
<evidence type="ECO:0000269" key="7">
    <source>
    </source>
</evidence>
<evidence type="ECO:0000269" key="8">
    <source>
    </source>
</evidence>
<evidence type="ECO:0000305" key="9"/>